<reference key="1">
    <citation type="journal article" date="2002" name="DNA Res.">
        <title>Complete genome structure of the thermophilic cyanobacterium Thermosynechococcus elongatus BP-1.</title>
        <authorList>
            <person name="Nakamura Y."/>
            <person name="Kaneko T."/>
            <person name="Sato S."/>
            <person name="Ikeuchi M."/>
            <person name="Katoh H."/>
            <person name="Sasamoto S."/>
            <person name="Watanabe A."/>
            <person name="Iriguchi M."/>
            <person name="Kawashima K."/>
            <person name="Kimura T."/>
            <person name="Kishida Y."/>
            <person name="Kiyokawa C."/>
            <person name="Kohara M."/>
            <person name="Matsumoto M."/>
            <person name="Matsuno A."/>
            <person name="Nakazaki N."/>
            <person name="Shimpo S."/>
            <person name="Sugimoto M."/>
            <person name="Takeuchi C."/>
            <person name="Yamada M."/>
            <person name="Tabata S."/>
        </authorList>
    </citation>
    <scope>NUCLEOTIDE SEQUENCE [LARGE SCALE GENOMIC DNA]</scope>
    <source>
        <strain>NIES-2133 / IAM M-273 / BP-1</strain>
    </source>
</reference>
<name>IF2_THEVB</name>
<comment type="function">
    <text evidence="2">One of the essential components for the initiation of protein synthesis. Protects formylmethionyl-tRNA from spontaneous hydrolysis and promotes its binding to the 30S ribosomal subunits. Also involved in the hydrolysis of GTP during the formation of the 70S ribosomal complex.</text>
</comment>
<comment type="subcellular location">
    <subcellularLocation>
        <location evidence="2">Cytoplasm</location>
    </subcellularLocation>
</comment>
<comment type="similarity">
    <text evidence="2">Belongs to the TRAFAC class translation factor GTPase superfamily. Classic translation factor GTPase family. IF-2 subfamily.</text>
</comment>
<feature type="chain" id="PRO_0000137270" description="Translation initiation factor IF-2">
    <location>
        <begin position="1"/>
        <end position="957"/>
    </location>
</feature>
<feature type="domain" description="tr-type G">
    <location>
        <begin position="444"/>
        <end position="617"/>
    </location>
</feature>
<feature type="region of interest" description="Disordered" evidence="3">
    <location>
        <begin position="34"/>
        <end position="282"/>
    </location>
</feature>
<feature type="region of interest" description="Disordered" evidence="3">
    <location>
        <begin position="311"/>
        <end position="367"/>
    </location>
</feature>
<feature type="region of interest" description="G1" evidence="1">
    <location>
        <begin position="453"/>
        <end position="460"/>
    </location>
</feature>
<feature type="region of interest" description="G2" evidence="1">
    <location>
        <begin position="478"/>
        <end position="482"/>
    </location>
</feature>
<feature type="region of interest" description="G3" evidence="1">
    <location>
        <begin position="503"/>
        <end position="506"/>
    </location>
</feature>
<feature type="region of interest" description="G4" evidence="1">
    <location>
        <begin position="557"/>
        <end position="560"/>
    </location>
</feature>
<feature type="region of interest" description="G5" evidence="1">
    <location>
        <begin position="593"/>
        <end position="595"/>
    </location>
</feature>
<feature type="compositionally biased region" description="Pro residues" evidence="3">
    <location>
        <begin position="107"/>
        <end position="161"/>
    </location>
</feature>
<feature type="compositionally biased region" description="Basic and acidic residues" evidence="3">
    <location>
        <begin position="163"/>
        <end position="188"/>
    </location>
</feature>
<feature type="compositionally biased region" description="Pro residues" evidence="3">
    <location>
        <begin position="209"/>
        <end position="242"/>
    </location>
</feature>
<feature type="compositionally biased region" description="Basic and acidic residues" evidence="3">
    <location>
        <begin position="250"/>
        <end position="259"/>
    </location>
</feature>
<feature type="compositionally biased region" description="Basic and acidic residues" evidence="3">
    <location>
        <begin position="266"/>
        <end position="275"/>
    </location>
</feature>
<feature type="binding site" evidence="2">
    <location>
        <begin position="453"/>
        <end position="460"/>
    </location>
    <ligand>
        <name>GTP</name>
        <dbReference type="ChEBI" id="CHEBI:37565"/>
    </ligand>
</feature>
<feature type="binding site" evidence="2">
    <location>
        <begin position="503"/>
        <end position="507"/>
    </location>
    <ligand>
        <name>GTP</name>
        <dbReference type="ChEBI" id="CHEBI:37565"/>
    </ligand>
</feature>
<feature type="binding site" evidence="2">
    <location>
        <begin position="557"/>
        <end position="560"/>
    </location>
    <ligand>
        <name>GTP</name>
        <dbReference type="ChEBI" id="CHEBI:37565"/>
    </ligand>
</feature>
<proteinExistence type="inferred from homology"/>
<dbReference type="EMBL" id="BA000039">
    <property type="protein sequence ID" value="BAC08619.1"/>
    <property type="molecule type" value="Genomic_DNA"/>
</dbReference>
<dbReference type="RefSeq" id="NP_681857.1">
    <property type="nucleotide sequence ID" value="NC_004113.1"/>
</dbReference>
<dbReference type="RefSeq" id="WP_011056909.1">
    <property type="nucleotide sequence ID" value="NC_004113.1"/>
</dbReference>
<dbReference type="SMR" id="Q8DK04"/>
<dbReference type="STRING" id="197221.gene:10747660"/>
<dbReference type="EnsemblBacteria" id="BAC08619">
    <property type="protein sequence ID" value="BAC08619"/>
    <property type="gene ID" value="BAC08619"/>
</dbReference>
<dbReference type="KEGG" id="tel:tlr1066"/>
<dbReference type="PATRIC" id="fig|197221.4.peg.1120"/>
<dbReference type="eggNOG" id="COG0532">
    <property type="taxonomic scope" value="Bacteria"/>
</dbReference>
<dbReference type="Proteomes" id="UP000000440">
    <property type="component" value="Chromosome"/>
</dbReference>
<dbReference type="GO" id="GO:0005829">
    <property type="term" value="C:cytosol"/>
    <property type="evidence" value="ECO:0007669"/>
    <property type="project" value="TreeGrafter"/>
</dbReference>
<dbReference type="GO" id="GO:0005525">
    <property type="term" value="F:GTP binding"/>
    <property type="evidence" value="ECO:0007669"/>
    <property type="project" value="UniProtKB-KW"/>
</dbReference>
<dbReference type="GO" id="GO:0003924">
    <property type="term" value="F:GTPase activity"/>
    <property type="evidence" value="ECO:0007669"/>
    <property type="project" value="UniProtKB-UniRule"/>
</dbReference>
<dbReference type="GO" id="GO:0003743">
    <property type="term" value="F:translation initiation factor activity"/>
    <property type="evidence" value="ECO:0007669"/>
    <property type="project" value="UniProtKB-UniRule"/>
</dbReference>
<dbReference type="CDD" id="cd01887">
    <property type="entry name" value="IF2_eIF5B"/>
    <property type="match status" value="1"/>
</dbReference>
<dbReference type="CDD" id="cd03702">
    <property type="entry name" value="IF2_mtIF2_II"/>
    <property type="match status" value="1"/>
</dbReference>
<dbReference type="CDD" id="cd03692">
    <property type="entry name" value="mtIF2_IVc"/>
    <property type="match status" value="1"/>
</dbReference>
<dbReference type="FunFam" id="2.40.30.10:FF:000007">
    <property type="entry name" value="Translation initiation factor IF-2"/>
    <property type="match status" value="1"/>
</dbReference>
<dbReference type="FunFam" id="2.40.30.10:FF:000008">
    <property type="entry name" value="Translation initiation factor IF-2"/>
    <property type="match status" value="1"/>
</dbReference>
<dbReference type="FunFam" id="3.40.50.10050:FF:000001">
    <property type="entry name" value="Translation initiation factor IF-2"/>
    <property type="match status" value="1"/>
</dbReference>
<dbReference type="FunFam" id="3.40.50.300:FF:000019">
    <property type="entry name" value="Translation initiation factor IF-2"/>
    <property type="match status" value="1"/>
</dbReference>
<dbReference type="Gene3D" id="1.10.10.2480">
    <property type="match status" value="1"/>
</dbReference>
<dbReference type="Gene3D" id="3.40.50.300">
    <property type="entry name" value="P-loop containing nucleotide triphosphate hydrolases"/>
    <property type="match status" value="1"/>
</dbReference>
<dbReference type="Gene3D" id="2.40.30.10">
    <property type="entry name" value="Translation factors"/>
    <property type="match status" value="2"/>
</dbReference>
<dbReference type="Gene3D" id="3.40.50.10050">
    <property type="entry name" value="Translation initiation factor IF- 2, domain 3"/>
    <property type="match status" value="1"/>
</dbReference>
<dbReference type="HAMAP" id="MF_00100_B">
    <property type="entry name" value="IF_2_B"/>
    <property type="match status" value="1"/>
</dbReference>
<dbReference type="InterPro" id="IPR053905">
    <property type="entry name" value="EF-G-like_DII"/>
</dbReference>
<dbReference type="InterPro" id="IPR044145">
    <property type="entry name" value="IF2_II"/>
</dbReference>
<dbReference type="InterPro" id="IPR006847">
    <property type="entry name" value="IF2_N"/>
</dbReference>
<dbReference type="InterPro" id="IPR027417">
    <property type="entry name" value="P-loop_NTPase"/>
</dbReference>
<dbReference type="InterPro" id="IPR005225">
    <property type="entry name" value="Small_GTP-bd"/>
</dbReference>
<dbReference type="InterPro" id="IPR000795">
    <property type="entry name" value="T_Tr_GTP-bd_dom"/>
</dbReference>
<dbReference type="InterPro" id="IPR000178">
    <property type="entry name" value="TF_IF2_bacterial-like"/>
</dbReference>
<dbReference type="InterPro" id="IPR015760">
    <property type="entry name" value="TIF_IF2"/>
</dbReference>
<dbReference type="InterPro" id="IPR023115">
    <property type="entry name" value="TIF_IF2_dom3"/>
</dbReference>
<dbReference type="InterPro" id="IPR036925">
    <property type="entry name" value="TIF_IF2_dom3_sf"/>
</dbReference>
<dbReference type="InterPro" id="IPR009000">
    <property type="entry name" value="Transl_B-barrel_sf"/>
</dbReference>
<dbReference type="NCBIfam" id="TIGR00487">
    <property type="entry name" value="IF-2"/>
    <property type="match status" value="1"/>
</dbReference>
<dbReference type="NCBIfam" id="TIGR00231">
    <property type="entry name" value="small_GTP"/>
    <property type="match status" value="1"/>
</dbReference>
<dbReference type="PANTHER" id="PTHR43381:SF5">
    <property type="entry name" value="TR-TYPE G DOMAIN-CONTAINING PROTEIN"/>
    <property type="match status" value="1"/>
</dbReference>
<dbReference type="PANTHER" id="PTHR43381">
    <property type="entry name" value="TRANSLATION INITIATION FACTOR IF-2-RELATED"/>
    <property type="match status" value="1"/>
</dbReference>
<dbReference type="Pfam" id="PF22042">
    <property type="entry name" value="EF-G_D2"/>
    <property type="match status" value="1"/>
</dbReference>
<dbReference type="Pfam" id="PF00009">
    <property type="entry name" value="GTP_EFTU"/>
    <property type="match status" value="1"/>
</dbReference>
<dbReference type="Pfam" id="PF11987">
    <property type="entry name" value="IF-2"/>
    <property type="match status" value="1"/>
</dbReference>
<dbReference type="Pfam" id="PF04760">
    <property type="entry name" value="IF2_N"/>
    <property type="match status" value="2"/>
</dbReference>
<dbReference type="PRINTS" id="PR01217">
    <property type="entry name" value="PRICHEXTENSN"/>
</dbReference>
<dbReference type="SUPFAM" id="SSF52156">
    <property type="entry name" value="Initiation factor IF2/eIF5b, domain 3"/>
    <property type="match status" value="1"/>
</dbReference>
<dbReference type="SUPFAM" id="SSF52540">
    <property type="entry name" value="P-loop containing nucleoside triphosphate hydrolases"/>
    <property type="match status" value="1"/>
</dbReference>
<dbReference type="SUPFAM" id="SSF50447">
    <property type="entry name" value="Translation proteins"/>
    <property type="match status" value="2"/>
</dbReference>
<dbReference type="PROSITE" id="PS51722">
    <property type="entry name" value="G_TR_2"/>
    <property type="match status" value="1"/>
</dbReference>
<dbReference type="PROSITE" id="PS01176">
    <property type="entry name" value="IF2"/>
    <property type="match status" value="1"/>
</dbReference>
<gene>
    <name evidence="2" type="primary">infB</name>
    <name type="ordered locus">tlr1066</name>
</gene>
<evidence type="ECO:0000250" key="1"/>
<evidence type="ECO:0000255" key="2">
    <source>
        <dbReference type="HAMAP-Rule" id="MF_00100"/>
    </source>
</evidence>
<evidence type="ECO:0000256" key="3">
    <source>
        <dbReference type="SAM" id="MobiDB-lite"/>
    </source>
</evidence>
<accession>Q8DK04</accession>
<sequence length="957" mass="104247">MSIGKVRIYDLSKELNLDNRDLLAICEQLGIAYKSHSSTISDADADRIREAAKTYQPHSASPRKVSKTSPPVKKAPAPQKTQQIVAVHTQPRSETPEAPKPQLQKPPARPQPPQAPTRPTPPAPVAPKPVEPVAAKPPAPPAKPEPTPPRPVPTLVPPPTRPTKKEEKVAATPPPRKELKEPPKKEKGAIAAAKPSSQDRIEIVQRAVPPAPAKPPEMAPKPALPELQPPPKPVRAPNPPKPVTETVEVLDDKSVSKVIKDRHRHKDFDEEESKRKSSRVVKLREEIIDEEEELELTSRLVGVHQVTVDVSQSLQRPPKPKVPRPARPVTPAAKTEKSSEKKQSRHRDRRPEEPAEAPPPDHITIAGPMSVQELATLVRRPEAEIIKTLFFKGIAATINQTLEVETIELVAKELGITVETAEHKVEATKVTEMLESSDLDHLQRRPPVVTIMGHVDHGKTTLLDAIRNAKVAQGEAGGITQHIGAYHVDVEHNGEKHQVVFLDTPGHEAFTAMRARGARVTDIAVLVVAADDGVQPQTIEAISHAKAAKVPIIVAINKIDKESAQPERIKQELTEYGLVPEEWGGDTIMVPVSALQQQNLDTLLEMILLVAEVEDLYANPNRPAKGTVIEAHLDRARGPVATLLVQNGTLRVGDILVAGACFGRVRAMIDDRGQRVEAATPSFAVEVLGLAEVPAAGDEFEVLSDEKAARALAEERAAAQRQSRLAQAAAARRVSLTSLSSQAREGELKELNLILKADVQGSVEAILTALNQLPQDQVQLRVLLAAPGEITETDVDLAAASSAVIIGFNTTLASGARQAAEQHNVDIREYNIIYKLLDDIQGAMEGMLEPELVEEELGQAEVRAIFPLSKGVVAGCYVLNGKLVRNCKVRVLRQQQVIHTGILSSLKRLKDDVREVAAGYECGVRLDDFQQWQEGDIIYAFQTVTKRRSLGSGSDRN</sequence>
<protein>
    <recommendedName>
        <fullName evidence="2">Translation initiation factor IF-2</fullName>
    </recommendedName>
</protein>
<organism>
    <name type="scientific">Thermosynechococcus vestitus (strain NIES-2133 / IAM M-273 / BP-1)</name>
    <dbReference type="NCBI Taxonomy" id="197221"/>
    <lineage>
        <taxon>Bacteria</taxon>
        <taxon>Bacillati</taxon>
        <taxon>Cyanobacteriota</taxon>
        <taxon>Cyanophyceae</taxon>
        <taxon>Acaryochloridales</taxon>
        <taxon>Thermosynechococcaceae</taxon>
        <taxon>Thermosynechococcus</taxon>
    </lineage>
</organism>
<keyword id="KW-0963">Cytoplasm</keyword>
<keyword id="KW-0342">GTP-binding</keyword>
<keyword id="KW-0396">Initiation factor</keyword>
<keyword id="KW-0547">Nucleotide-binding</keyword>
<keyword id="KW-0648">Protein biosynthesis</keyword>
<keyword id="KW-1185">Reference proteome</keyword>